<reference key="1">
    <citation type="submission" date="1996-02" db="EMBL/GenBank/DDBJ databases">
        <title>Isolation and molecular cloning of human spp-24, a bone phosphoprotein related in sequence to the cystatin family of thiol protease inhibitors.</title>
        <authorList>
            <person name="Coulson L."/>
            <person name="Hu B."/>
            <person name="Price P.A."/>
        </authorList>
    </citation>
    <scope>NUCLEOTIDE SEQUENCE [MRNA]</scope>
    <source>
        <tissue>Bone</tissue>
    </source>
</reference>
<reference key="2">
    <citation type="journal article" date="2004" name="Matrix Biol.">
        <title>Characterization of the human secreted phosphoprotein 24 gene (SPP2) and comparison of the protein sequence in nine species.</title>
        <authorList>
            <person name="Bennett C.S."/>
            <person name="Khorram Khorshid H.R."/>
            <person name="Kitchen J.A."/>
            <person name="Arteta D."/>
            <person name="Dalgleish R."/>
        </authorList>
    </citation>
    <scope>NUCLEOTIDE SEQUENCE [GENOMIC DNA / MRNA]</scope>
    <scope>DEVELOPMENTAL STAGE</scope>
    <scope>TISSUE SPECIFICITY</scope>
    <scope>VARIANT PHE-38</scope>
    <source>
        <tissue>Liver</tissue>
    </source>
</reference>
<reference key="3">
    <citation type="journal article" date="2005" name="Nature">
        <title>Generation and annotation of the DNA sequences of human chromosomes 2 and 4.</title>
        <authorList>
            <person name="Hillier L.W."/>
            <person name="Graves T.A."/>
            <person name="Fulton R.S."/>
            <person name="Fulton L.A."/>
            <person name="Pepin K.H."/>
            <person name="Minx P."/>
            <person name="Wagner-McPherson C."/>
            <person name="Layman D."/>
            <person name="Wylie K."/>
            <person name="Sekhon M."/>
            <person name="Becker M.C."/>
            <person name="Fewell G.A."/>
            <person name="Delehaunty K.D."/>
            <person name="Miner T.L."/>
            <person name="Nash W.E."/>
            <person name="Kremitzki C."/>
            <person name="Oddy L."/>
            <person name="Du H."/>
            <person name="Sun H."/>
            <person name="Bradshaw-Cordum H."/>
            <person name="Ali J."/>
            <person name="Carter J."/>
            <person name="Cordes M."/>
            <person name="Harris A."/>
            <person name="Isak A."/>
            <person name="van Brunt A."/>
            <person name="Nguyen C."/>
            <person name="Du F."/>
            <person name="Courtney L."/>
            <person name="Kalicki J."/>
            <person name="Ozersky P."/>
            <person name="Abbott S."/>
            <person name="Armstrong J."/>
            <person name="Belter E.A."/>
            <person name="Caruso L."/>
            <person name="Cedroni M."/>
            <person name="Cotton M."/>
            <person name="Davidson T."/>
            <person name="Desai A."/>
            <person name="Elliott G."/>
            <person name="Erb T."/>
            <person name="Fronick C."/>
            <person name="Gaige T."/>
            <person name="Haakenson W."/>
            <person name="Haglund K."/>
            <person name="Holmes A."/>
            <person name="Harkins R."/>
            <person name="Kim K."/>
            <person name="Kruchowski S.S."/>
            <person name="Strong C.M."/>
            <person name="Grewal N."/>
            <person name="Goyea E."/>
            <person name="Hou S."/>
            <person name="Levy A."/>
            <person name="Martinka S."/>
            <person name="Mead K."/>
            <person name="McLellan M.D."/>
            <person name="Meyer R."/>
            <person name="Randall-Maher J."/>
            <person name="Tomlinson C."/>
            <person name="Dauphin-Kohlberg S."/>
            <person name="Kozlowicz-Reilly A."/>
            <person name="Shah N."/>
            <person name="Swearengen-Shahid S."/>
            <person name="Snider J."/>
            <person name="Strong J.T."/>
            <person name="Thompson J."/>
            <person name="Yoakum M."/>
            <person name="Leonard S."/>
            <person name="Pearman C."/>
            <person name="Trani L."/>
            <person name="Radionenko M."/>
            <person name="Waligorski J.E."/>
            <person name="Wang C."/>
            <person name="Rock S.M."/>
            <person name="Tin-Wollam A.-M."/>
            <person name="Maupin R."/>
            <person name="Latreille P."/>
            <person name="Wendl M.C."/>
            <person name="Yang S.-P."/>
            <person name="Pohl C."/>
            <person name="Wallis J.W."/>
            <person name="Spieth J."/>
            <person name="Bieri T.A."/>
            <person name="Berkowicz N."/>
            <person name="Nelson J.O."/>
            <person name="Osborne J."/>
            <person name="Ding L."/>
            <person name="Meyer R."/>
            <person name="Sabo A."/>
            <person name="Shotland Y."/>
            <person name="Sinha P."/>
            <person name="Wohldmann P.E."/>
            <person name="Cook L.L."/>
            <person name="Hickenbotham M.T."/>
            <person name="Eldred J."/>
            <person name="Williams D."/>
            <person name="Jones T.A."/>
            <person name="She X."/>
            <person name="Ciccarelli F.D."/>
            <person name="Izaurralde E."/>
            <person name="Taylor J."/>
            <person name="Schmutz J."/>
            <person name="Myers R.M."/>
            <person name="Cox D.R."/>
            <person name="Huang X."/>
            <person name="McPherson J.D."/>
            <person name="Mardis E.R."/>
            <person name="Clifton S.W."/>
            <person name="Warren W.C."/>
            <person name="Chinwalla A.T."/>
            <person name="Eddy S.R."/>
            <person name="Marra M.A."/>
            <person name="Ovcharenko I."/>
            <person name="Furey T.S."/>
            <person name="Miller W."/>
            <person name="Eichler E.E."/>
            <person name="Bork P."/>
            <person name="Suyama M."/>
            <person name="Torrents D."/>
            <person name="Waterston R.H."/>
            <person name="Wilson R.K."/>
        </authorList>
    </citation>
    <scope>NUCLEOTIDE SEQUENCE [LARGE SCALE GENOMIC DNA]</scope>
</reference>
<reference key="4">
    <citation type="submission" date="2005-07" db="EMBL/GenBank/DDBJ databases">
        <authorList>
            <person name="Mural R.J."/>
            <person name="Istrail S."/>
            <person name="Sutton G.G."/>
            <person name="Florea L."/>
            <person name="Halpern A.L."/>
            <person name="Mobarry C.M."/>
            <person name="Lippert R."/>
            <person name="Walenz B."/>
            <person name="Shatkay H."/>
            <person name="Dew I."/>
            <person name="Miller J.R."/>
            <person name="Flanigan M.J."/>
            <person name="Edwards N.J."/>
            <person name="Bolanos R."/>
            <person name="Fasulo D."/>
            <person name="Halldorsson B.V."/>
            <person name="Hannenhalli S."/>
            <person name="Turner R."/>
            <person name="Yooseph S."/>
            <person name="Lu F."/>
            <person name="Nusskern D.R."/>
            <person name="Shue B.C."/>
            <person name="Zheng X.H."/>
            <person name="Zhong F."/>
            <person name="Delcher A.L."/>
            <person name="Huson D.H."/>
            <person name="Kravitz S.A."/>
            <person name="Mouchard L."/>
            <person name="Reinert K."/>
            <person name="Remington K.A."/>
            <person name="Clark A.G."/>
            <person name="Waterman M.S."/>
            <person name="Eichler E.E."/>
            <person name="Adams M.D."/>
            <person name="Hunkapiller M.W."/>
            <person name="Myers E.W."/>
            <person name="Venter J.C."/>
        </authorList>
    </citation>
    <scope>NUCLEOTIDE SEQUENCE [LARGE SCALE GENOMIC DNA]</scope>
</reference>
<reference key="5">
    <citation type="journal article" date="2004" name="Genome Res.">
        <title>The status, quality, and expansion of the NIH full-length cDNA project: the Mammalian Gene Collection (MGC).</title>
        <authorList>
            <consortium name="The MGC Project Team"/>
        </authorList>
    </citation>
    <scope>NUCLEOTIDE SEQUENCE [LARGE SCALE MRNA]</scope>
</reference>
<reference key="6">
    <citation type="journal article" date="2011" name="BMC Syst. Biol.">
        <title>Initial characterization of the human central proteome.</title>
        <authorList>
            <person name="Burkard T.R."/>
            <person name="Planyavsky M."/>
            <person name="Kaupe I."/>
            <person name="Breitwieser F.P."/>
            <person name="Buerckstuemmer T."/>
            <person name="Bennett K.L."/>
            <person name="Superti-Furga G."/>
            <person name="Colinge J."/>
        </authorList>
    </citation>
    <scope>IDENTIFICATION BY MASS SPECTROMETRY [LARGE SCALE ANALYSIS]</scope>
</reference>
<reference key="7">
    <citation type="journal article" date="2014" name="J. Proteomics">
        <title>An enzyme assisted RP-RPLC approach for in-depth analysis of human liver phosphoproteome.</title>
        <authorList>
            <person name="Bian Y."/>
            <person name="Song C."/>
            <person name="Cheng K."/>
            <person name="Dong M."/>
            <person name="Wang F."/>
            <person name="Huang J."/>
            <person name="Sun D."/>
            <person name="Wang L."/>
            <person name="Ye M."/>
            <person name="Zou H."/>
        </authorList>
    </citation>
    <scope>PHOSPHORYLATION [LARGE SCALE ANALYSIS] AT SER-96</scope>
    <scope>IDENTIFICATION BY MASS SPECTROMETRY [LARGE SCALE ANALYSIS]</scope>
    <source>
        <tissue>Liver</tissue>
    </source>
</reference>
<feature type="signal peptide" evidence="4">
    <location>
        <begin position="1"/>
        <end position="29"/>
    </location>
</feature>
<feature type="chain" id="PRO_0000022403" description="Secreted phosphoprotein 24">
    <location>
        <begin position="30"/>
        <end position="211"/>
    </location>
</feature>
<feature type="modified residue" description="Phosphoserine" evidence="7">
    <location>
        <position position="96"/>
    </location>
</feature>
<feature type="modified residue" description="Phosphoserine" evidence="2">
    <location>
        <position position="145"/>
    </location>
</feature>
<feature type="modified residue" description="Phosphoserine" evidence="2">
    <location>
        <position position="146"/>
    </location>
</feature>
<feature type="modified residue" description="Phosphoserine" evidence="3">
    <location>
        <position position="170"/>
    </location>
</feature>
<feature type="modified residue" description="Phosphoserine" evidence="3">
    <location>
        <position position="173"/>
    </location>
</feature>
<feature type="modified residue" description="Phosphoserine" evidence="2">
    <location>
        <position position="182"/>
    </location>
</feature>
<feature type="disulfide bond" evidence="1">
    <location>
        <begin position="92"/>
        <end position="103"/>
    </location>
</feature>
<feature type="disulfide bond" evidence="1">
    <location>
        <begin position="116"/>
        <end position="134"/>
    </location>
</feature>
<feature type="sequence variant" id="VAR_025698" description="In dbSNP:rs34347825." evidence="5">
    <original>S</original>
    <variation>F</variation>
    <location>
        <position position="38"/>
    </location>
</feature>
<feature type="sequence conflict" description="In Ref. 5; AAI06706." evidence="6" ref="5">
    <original>A</original>
    <variation>V</variation>
    <location>
        <position position="124"/>
    </location>
</feature>
<name>SPP24_HUMAN</name>
<keyword id="KW-1015">Disulfide bond</keyword>
<keyword id="KW-0597">Phosphoprotein</keyword>
<keyword id="KW-1267">Proteomics identification</keyword>
<keyword id="KW-1185">Reference proteome</keyword>
<keyword id="KW-0964">Secreted</keyword>
<keyword id="KW-0732">Signal</keyword>
<accession>Q13103</accession>
<accession>A4QMV3</accession>
<accession>Q3B892</accession>
<accession>Q546M5</accession>
<dbReference type="EMBL" id="U20530">
    <property type="protein sequence ID" value="AAA87905.1"/>
    <property type="molecule type" value="mRNA"/>
</dbReference>
<dbReference type="EMBL" id="AJ272265">
    <property type="protein sequence ID" value="CAB75571.1"/>
    <property type="molecule type" value="Genomic_DNA"/>
</dbReference>
<dbReference type="EMBL" id="AJ308099">
    <property type="protein sequence ID" value="CAC87050.1"/>
    <property type="molecule type" value="mRNA"/>
</dbReference>
<dbReference type="EMBL" id="AC006037">
    <property type="protein sequence ID" value="AAX93090.1"/>
    <property type="molecule type" value="Genomic_DNA"/>
</dbReference>
<dbReference type="EMBL" id="CH471063">
    <property type="protein sequence ID" value="EAW71070.1"/>
    <property type="molecule type" value="Genomic_DNA"/>
</dbReference>
<dbReference type="EMBL" id="BC069401">
    <property type="protein sequence ID" value="AAH69401.1"/>
    <property type="molecule type" value="mRNA"/>
</dbReference>
<dbReference type="EMBL" id="BC106705">
    <property type="protein sequence ID" value="AAI06706.1"/>
    <property type="molecule type" value="mRNA"/>
</dbReference>
<dbReference type="EMBL" id="BC112438">
    <property type="protein sequence ID" value="AAI12439.1"/>
    <property type="molecule type" value="mRNA"/>
</dbReference>
<dbReference type="CCDS" id="CCDS2511.1"/>
<dbReference type="PIR" id="G01654">
    <property type="entry name" value="G01654"/>
</dbReference>
<dbReference type="RefSeq" id="NP_008875.1">
    <property type="nucleotide sequence ID" value="NM_006944.3"/>
</dbReference>
<dbReference type="RefSeq" id="XP_005246159.1">
    <property type="nucleotide sequence ID" value="XM_005246102.5"/>
</dbReference>
<dbReference type="RefSeq" id="XP_011510000.1">
    <property type="nucleotide sequence ID" value="XM_011511698.3"/>
</dbReference>
<dbReference type="RefSeq" id="XP_011510001.1">
    <property type="nucleotide sequence ID" value="XM_011511699.4"/>
</dbReference>
<dbReference type="RefSeq" id="XP_011510002.1">
    <property type="nucleotide sequence ID" value="XM_011511700.4"/>
</dbReference>
<dbReference type="RefSeq" id="XP_054199509.1">
    <property type="nucleotide sequence ID" value="XM_054343534.1"/>
</dbReference>
<dbReference type="RefSeq" id="XP_054199510.1">
    <property type="nucleotide sequence ID" value="XM_054343535.1"/>
</dbReference>
<dbReference type="RefSeq" id="XP_054199511.1">
    <property type="nucleotide sequence ID" value="XM_054343536.1"/>
</dbReference>
<dbReference type="RefSeq" id="XP_054199512.1">
    <property type="nucleotide sequence ID" value="XM_054343537.1"/>
</dbReference>
<dbReference type="SMR" id="Q13103"/>
<dbReference type="BioGRID" id="112572">
    <property type="interactions" value="1"/>
</dbReference>
<dbReference type="FunCoup" id="Q13103">
    <property type="interactions" value="13"/>
</dbReference>
<dbReference type="IntAct" id="Q13103">
    <property type="interactions" value="1"/>
</dbReference>
<dbReference type="STRING" id="9606.ENSP00000168148"/>
<dbReference type="iPTMnet" id="Q13103"/>
<dbReference type="PhosphoSitePlus" id="Q13103"/>
<dbReference type="BioMuta" id="SPP2"/>
<dbReference type="DMDM" id="2498939"/>
<dbReference type="jPOST" id="Q13103"/>
<dbReference type="MassIVE" id="Q13103"/>
<dbReference type="PaxDb" id="9606-ENSP00000168148"/>
<dbReference type="PeptideAtlas" id="Q13103"/>
<dbReference type="ProteomicsDB" id="59154"/>
<dbReference type="Antibodypedia" id="34459">
    <property type="antibodies" value="45 antibodies from 6 providers"/>
</dbReference>
<dbReference type="DNASU" id="6694"/>
<dbReference type="Ensembl" id="ENST00000168148.8">
    <property type="protein sequence ID" value="ENSP00000168148.3"/>
    <property type="gene ID" value="ENSG00000072080.11"/>
</dbReference>
<dbReference type="Ensembl" id="ENST00000373368.5">
    <property type="protein sequence ID" value="ENSP00000362466.1"/>
    <property type="gene ID" value="ENSG00000072080.11"/>
</dbReference>
<dbReference type="GeneID" id="6694"/>
<dbReference type="KEGG" id="hsa:6694"/>
<dbReference type="MANE-Select" id="ENST00000168148.8">
    <property type="protein sequence ID" value="ENSP00000168148.3"/>
    <property type="RefSeq nucleotide sequence ID" value="NM_006944.3"/>
    <property type="RefSeq protein sequence ID" value="NP_008875.1"/>
</dbReference>
<dbReference type="UCSC" id="uc002vvk.2">
    <property type="organism name" value="human"/>
</dbReference>
<dbReference type="AGR" id="HGNC:11256"/>
<dbReference type="CTD" id="6694"/>
<dbReference type="DisGeNET" id="6694"/>
<dbReference type="GeneCards" id="SPP2"/>
<dbReference type="HGNC" id="HGNC:11256">
    <property type="gene designation" value="SPP2"/>
</dbReference>
<dbReference type="HPA" id="ENSG00000072080">
    <property type="expression patterns" value="Tissue enriched (liver)"/>
</dbReference>
<dbReference type="MalaCards" id="SPP2"/>
<dbReference type="MIM" id="602637">
    <property type="type" value="gene"/>
</dbReference>
<dbReference type="neXtProt" id="NX_Q13103"/>
<dbReference type="OpenTargets" id="ENSG00000072080"/>
<dbReference type="PharmGKB" id="PA36086"/>
<dbReference type="VEuPathDB" id="HostDB:ENSG00000072080"/>
<dbReference type="eggNOG" id="ENOG502S7TB">
    <property type="taxonomic scope" value="Eukaryota"/>
</dbReference>
<dbReference type="GeneTree" id="ENSGT00390000009001"/>
<dbReference type="HOGENOM" id="CLU_115216_0_0_1"/>
<dbReference type="InParanoid" id="Q13103"/>
<dbReference type="OMA" id="CRSTVQM"/>
<dbReference type="OrthoDB" id="9944258at2759"/>
<dbReference type="PAN-GO" id="Q13103">
    <property type="GO annotations" value="0 GO annotations based on evolutionary models"/>
</dbReference>
<dbReference type="PhylomeDB" id="Q13103"/>
<dbReference type="TreeFam" id="TF335972"/>
<dbReference type="PathwayCommons" id="Q13103"/>
<dbReference type="Reactome" id="R-HSA-114608">
    <property type="pathway name" value="Platelet degranulation"/>
</dbReference>
<dbReference type="Reactome" id="R-HSA-381426">
    <property type="pathway name" value="Regulation of Insulin-like Growth Factor (IGF) transport and uptake by Insulin-like Growth Factor Binding Proteins (IGFBPs)"/>
</dbReference>
<dbReference type="Reactome" id="R-HSA-8957275">
    <property type="pathway name" value="Post-translational protein phosphorylation"/>
</dbReference>
<dbReference type="SignaLink" id="Q13103"/>
<dbReference type="BioGRID-ORCS" id="6694">
    <property type="hits" value="9 hits in 1148 CRISPR screens"/>
</dbReference>
<dbReference type="ChiTaRS" id="SPP2">
    <property type="organism name" value="human"/>
</dbReference>
<dbReference type="GenomeRNAi" id="6694"/>
<dbReference type="Pharos" id="Q13103">
    <property type="development level" value="Tbio"/>
</dbReference>
<dbReference type="PRO" id="PR:Q13103"/>
<dbReference type="Proteomes" id="UP000005640">
    <property type="component" value="Chromosome 2"/>
</dbReference>
<dbReference type="RNAct" id="Q13103">
    <property type="molecule type" value="protein"/>
</dbReference>
<dbReference type="Bgee" id="ENSG00000072080">
    <property type="expression patterns" value="Expressed in right lobe of liver and 62 other cell types or tissues"/>
</dbReference>
<dbReference type="ExpressionAtlas" id="Q13103">
    <property type="expression patterns" value="baseline and differential"/>
</dbReference>
<dbReference type="GO" id="GO:0062023">
    <property type="term" value="C:collagen-containing extracellular matrix"/>
    <property type="evidence" value="ECO:0007005"/>
    <property type="project" value="BHF-UCL"/>
</dbReference>
<dbReference type="GO" id="GO:0005788">
    <property type="term" value="C:endoplasmic reticulum lumen"/>
    <property type="evidence" value="ECO:0000304"/>
    <property type="project" value="Reactome"/>
</dbReference>
<dbReference type="GO" id="GO:0005576">
    <property type="term" value="C:extracellular region"/>
    <property type="evidence" value="ECO:0000304"/>
    <property type="project" value="Reactome"/>
</dbReference>
<dbReference type="GO" id="GO:0031089">
    <property type="term" value="C:platelet dense granule lumen"/>
    <property type="evidence" value="ECO:0000304"/>
    <property type="project" value="Reactome"/>
</dbReference>
<dbReference type="GO" id="GO:0032991">
    <property type="term" value="C:protein-containing complex"/>
    <property type="evidence" value="ECO:0007669"/>
    <property type="project" value="Ensembl"/>
</dbReference>
<dbReference type="GO" id="GO:0004866">
    <property type="term" value="F:endopeptidase inhibitor activity"/>
    <property type="evidence" value="ECO:0000304"/>
    <property type="project" value="ProtInc"/>
</dbReference>
<dbReference type="GO" id="GO:0046849">
    <property type="term" value="P:bone remodeling"/>
    <property type="evidence" value="ECO:0007669"/>
    <property type="project" value="InterPro"/>
</dbReference>
<dbReference type="GO" id="GO:0065003">
    <property type="term" value="P:protein-containing complex assembly"/>
    <property type="evidence" value="ECO:0007669"/>
    <property type="project" value="Ensembl"/>
</dbReference>
<dbReference type="GO" id="GO:0001501">
    <property type="term" value="P:skeletal system development"/>
    <property type="evidence" value="ECO:0000304"/>
    <property type="project" value="ProtInc"/>
</dbReference>
<dbReference type="FunFam" id="3.10.450.10:FF:000018">
    <property type="entry name" value="Secreted phosphoprotein 2"/>
    <property type="match status" value="1"/>
</dbReference>
<dbReference type="Gene3D" id="3.10.450.10">
    <property type="match status" value="1"/>
</dbReference>
<dbReference type="InterPro" id="IPR046350">
    <property type="entry name" value="Cystatin_sf"/>
</dbReference>
<dbReference type="InterPro" id="IPR010892">
    <property type="entry name" value="Spp-24"/>
</dbReference>
<dbReference type="PANTHER" id="PTHR15444">
    <property type="entry name" value="SECRETED PHOSPHOPROTEIN 24"/>
    <property type="match status" value="1"/>
</dbReference>
<dbReference type="PANTHER" id="PTHR15444:SF4">
    <property type="entry name" value="SECRETED PHOSPHOPROTEIN 24"/>
    <property type="match status" value="1"/>
</dbReference>
<dbReference type="Pfam" id="PF07448">
    <property type="entry name" value="Spp-24"/>
    <property type="match status" value="1"/>
</dbReference>
<dbReference type="SUPFAM" id="SSF54403">
    <property type="entry name" value="Cystatin/monellin"/>
    <property type="match status" value="1"/>
</dbReference>
<organism>
    <name type="scientific">Homo sapiens</name>
    <name type="common">Human</name>
    <dbReference type="NCBI Taxonomy" id="9606"/>
    <lineage>
        <taxon>Eukaryota</taxon>
        <taxon>Metazoa</taxon>
        <taxon>Chordata</taxon>
        <taxon>Craniata</taxon>
        <taxon>Vertebrata</taxon>
        <taxon>Euteleostomi</taxon>
        <taxon>Mammalia</taxon>
        <taxon>Eutheria</taxon>
        <taxon>Euarchontoglires</taxon>
        <taxon>Primates</taxon>
        <taxon>Haplorrhini</taxon>
        <taxon>Catarrhini</taxon>
        <taxon>Hominidae</taxon>
        <taxon>Homo</taxon>
    </lineage>
</organism>
<protein>
    <recommendedName>
        <fullName>Secreted phosphoprotein 24</fullName>
        <shortName>Spp-24</shortName>
    </recommendedName>
    <alternativeName>
        <fullName>Secreted phosphoprotein 2</fullName>
    </alternativeName>
</protein>
<evidence type="ECO:0000250" key="1"/>
<evidence type="ECO:0000250" key="2">
    <source>
        <dbReference type="UniProtKB" id="Q62740"/>
    </source>
</evidence>
<evidence type="ECO:0000250" key="3">
    <source>
        <dbReference type="UniProtKB" id="Q8K1I3"/>
    </source>
</evidence>
<evidence type="ECO:0000255" key="4"/>
<evidence type="ECO:0000269" key="5">
    <source>
    </source>
</evidence>
<evidence type="ECO:0000305" key="6"/>
<evidence type="ECO:0007744" key="7">
    <source>
    </source>
</evidence>
<sequence length="211" mass="24338">MISRMEKMTMMMKILIMFALGMNYWSCSGFPVYDYDPSSLRDALSASVVKVNSQSLSPYLFRAFRSSLKRVEVLDENNLVMNLEFSIRETTCRKDSGEDPATCAFQRDYYVSTAVCRSTVKVSAQQVQGVHARCSWSSSTSESYSSEEMIFGDMLGSHKWRNNYLFGLISDESISEQFYDRSLGIMRRVLPPGNRRYPNHRHRARINTDFE</sequence>
<comment type="function">
    <text evidence="1">Could coordinate an aspect of bone turnover.</text>
</comment>
<comment type="subcellular location">
    <subcellularLocation>
        <location>Secreted</location>
    </subcellularLocation>
</comment>
<comment type="tissue specificity">
    <text evidence="5">Detected in liver and plasma.</text>
</comment>
<comment type="developmental stage">
    <text evidence="5">Found in fetal liver and kidney.</text>
</comment>
<comment type="PTM">
    <text>Phosphorylation sites are present in the extracellular medium.</text>
</comment>
<comment type="similarity">
    <text evidence="6">Belongs to the SPP2 family.</text>
</comment>
<proteinExistence type="evidence at protein level"/>
<gene>
    <name type="primary">SPP2</name>
    <name type="synonym">SPP24</name>
</gene>